<dbReference type="EMBL" id="BC129353">
    <property type="protein sequence ID" value="AAI29354.1"/>
    <property type="molecule type" value="mRNA"/>
</dbReference>
<dbReference type="RefSeq" id="NP_001074134.1">
    <property type="nucleotide sequence ID" value="NM_001080665.1"/>
</dbReference>
<dbReference type="SMR" id="A1L253"/>
<dbReference type="FunCoup" id="A1L253">
    <property type="interactions" value="2102"/>
</dbReference>
<dbReference type="STRING" id="7955.ENSDARP00000081496"/>
<dbReference type="PaxDb" id="7955-ENSDARP00000106085"/>
<dbReference type="GeneID" id="791183"/>
<dbReference type="KEGG" id="dre:791183"/>
<dbReference type="AGR" id="ZFIN:ZDB-GENE-070112-2102"/>
<dbReference type="CTD" id="317662"/>
<dbReference type="ZFIN" id="ZDB-GENE-070112-2102">
    <property type="gene designation" value="fam149b1"/>
</dbReference>
<dbReference type="eggNOG" id="ENOG502QVD4">
    <property type="taxonomic scope" value="Eukaryota"/>
</dbReference>
<dbReference type="InParanoid" id="A1L253"/>
<dbReference type="OrthoDB" id="2134133at2759"/>
<dbReference type="PhylomeDB" id="A1L253"/>
<dbReference type="PRO" id="PR:A1L253"/>
<dbReference type="Proteomes" id="UP000000437">
    <property type="component" value="Alternate scaffold 17"/>
</dbReference>
<dbReference type="Proteomes" id="UP000000437">
    <property type="component" value="Chromosome 17"/>
</dbReference>
<dbReference type="GO" id="GO:0060271">
    <property type="term" value="P:cilium assembly"/>
    <property type="evidence" value="ECO:0000318"/>
    <property type="project" value="GO_Central"/>
</dbReference>
<dbReference type="GO" id="GO:0061512">
    <property type="term" value="P:protein localization to cilium"/>
    <property type="evidence" value="ECO:0000318"/>
    <property type="project" value="GO_Central"/>
</dbReference>
<dbReference type="InterPro" id="IPR022194">
    <property type="entry name" value="DUF3719"/>
</dbReference>
<dbReference type="InterPro" id="IPR039630">
    <property type="entry name" value="FAM149"/>
</dbReference>
<dbReference type="PANTHER" id="PTHR31997">
    <property type="entry name" value="AGAP003710-PA"/>
    <property type="match status" value="1"/>
</dbReference>
<dbReference type="PANTHER" id="PTHR31997:SF0">
    <property type="entry name" value="PRIMARY CILIUM ASSEMBLY PROTEIN FAM149B1"/>
    <property type="match status" value="1"/>
</dbReference>
<dbReference type="Pfam" id="PF12516">
    <property type="entry name" value="DUF3719"/>
    <property type="match status" value="1"/>
</dbReference>
<gene>
    <name type="primary">fam149b1</name>
    <name type="ORF">zgc:158651</name>
</gene>
<organism>
    <name type="scientific">Danio rerio</name>
    <name type="common">Zebrafish</name>
    <name type="synonym">Brachydanio rerio</name>
    <dbReference type="NCBI Taxonomy" id="7955"/>
    <lineage>
        <taxon>Eukaryota</taxon>
        <taxon>Metazoa</taxon>
        <taxon>Chordata</taxon>
        <taxon>Craniata</taxon>
        <taxon>Vertebrata</taxon>
        <taxon>Euteleostomi</taxon>
        <taxon>Actinopterygii</taxon>
        <taxon>Neopterygii</taxon>
        <taxon>Teleostei</taxon>
        <taxon>Ostariophysi</taxon>
        <taxon>Cypriniformes</taxon>
        <taxon>Danionidae</taxon>
        <taxon>Danioninae</taxon>
        <taxon>Danio</taxon>
    </lineage>
</organism>
<protein>
    <recommendedName>
        <fullName>Protein FAM149B1</fullName>
    </recommendedName>
</protein>
<sequence>MISRYSRRPVSHNLEIRGLSRSCLDQHPLPEEADNGTAHSSRLLHNLQEDMSLYSRSEESSASSVRSGCQTLTTDDTVPSWSGIHSYTGTGISTERSSVFSWGYDEFDKAASRQVQQMFEEIDELLYERKCETQLKGLQDECQEWAFRFPHLRILGTQVVCPTDEGFQWYATPAQTPSPSSSFQSKENTVSELYVQGRRAVLCRPTVEVTNPSIRTSGNNEDELPSVIEAEGLIEEYLAYDCRDMDEECEREYVSRRRRRRRCLPPVSPYRCRQEAVLDMLFDDVWRELIGWIEELVRKHWDGYVLDDEKSTVALSPKCPDPQNPFMLPSNVSTVLPPLSQTRTQQLTTNLQAQTSRVPVGPAVAHHNLNDLIMIHGIPLQQRNLGTLDRLNQSDCRDSEDKVSHRPGSSVIPAGKPRPRRALDQSTSSLTRPPQSARRRNPPPRNLMPITSSVTQPITTMEEVVRGTRLTTPSDRLTSPPMHLSRNTLLPPIGTGDIDHVYSGQHTRLIQKQRGSSSRAHSAVTDEGISLQPRDKLHLLDVFSRPNTTHTFRSDTPYHRSFTGIDNIGQGRPGRASVGVDSLGIGVTGISLGISSSSFIDSFSHRPMGHFPIGHEEEPDAKASGQARSHNRGGSTARSSRPGL</sequence>
<accession>A1L253</accession>
<reference key="1">
    <citation type="submission" date="2006-12" db="EMBL/GenBank/DDBJ databases">
        <authorList>
            <consortium name="NIH - Zebrafish Gene Collection (ZGC) project"/>
        </authorList>
    </citation>
    <scope>NUCLEOTIDE SEQUENCE [LARGE SCALE MRNA]</scope>
    <source>
        <tissue>Olfactory epithelium</tissue>
    </source>
</reference>
<name>F149B_DANRE</name>
<feature type="chain" id="PRO_0000319936" description="Protein FAM149B1">
    <location>
        <begin position="1"/>
        <end position="644"/>
    </location>
</feature>
<feature type="region of interest" description="Disordered" evidence="1">
    <location>
        <begin position="392"/>
        <end position="490"/>
    </location>
</feature>
<feature type="region of interest" description="Disordered" evidence="1">
    <location>
        <begin position="551"/>
        <end position="575"/>
    </location>
</feature>
<feature type="region of interest" description="Disordered" evidence="1">
    <location>
        <begin position="609"/>
        <end position="644"/>
    </location>
</feature>
<feature type="compositionally biased region" description="Basic and acidic residues" evidence="1">
    <location>
        <begin position="395"/>
        <end position="404"/>
    </location>
</feature>
<feature type="compositionally biased region" description="Polar residues" evidence="1">
    <location>
        <begin position="449"/>
        <end position="459"/>
    </location>
</feature>
<feature type="compositionally biased region" description="Polar residues" evidence="1">
    <location>
        <begin position="626"/>
        <end position="644"/>
    </location>
</feature>
<evidence type="ECO:0000256" key="1">
    <source>
        <dbReference type="SAM" id="MobiDB-lite"/>
    </source>
</evidence>
<evidence type="ECO:0000305" key="2"/>
<comment type="similarity">
    <text evidence="2">Belongs to the FAM149 family.</text>
</comment>
<keyword id="KW-1185">Reference proteome</keyword>
<proteinExistence type="evidence at transcript level"/>